<dbReference type="EC" id="4.6.1.-" evidence="4"/>
<dbReference type="PIR" id="A38107">
    <property type="entry name" value="A38107"/>
</dbReference>
<dbReference type="SMR" id="Q7M485"/>
<dbReference type="ArachnoServer" id="AS000160">
    <property type="toxin name" value="Sphingomyelinase D (LrSicTox1) (N-terminal fragment)"/>
</dbReference>
<dbReference type="GO" id="GO:0005576">
    <property type="term" value="C:extracellular region"/>
    <property type="evidence" value="ECO:0007669"/>
    <property type="project" value="UniProtKB-SubCell"/>
</dbReference>
<dbReference type="GO" id="GO:0016829">
    <property type="term" value="F:lyase activity"/>
    <property type="evidence" value="ECO:0007669"/>
    <property type="project" value="UniProtKB-KW"/>
</dbReference>
<dbReference type="GO" id="GO:0046872">
    <property type="term" value="F:metal ion binding"/>
    <property type="evidence" value="ECO:0007669"/>
    <property type="project" value="UniProtKB-KW"/>
</dbReference>
<dbReference type="GO" id="GO:0008081">
    <property type="term" value="F:phosphoric diester hydrolase activity"/>
    <property type="evidence" value="ECO:0007669"/>
    <property type="project" value="InterPro"/>
</dbReference>
<dbReference type="GO" id="GO:0090729">
    <property type="term" value="F:toxin activity"/>
    <property type="evidence" value="ECO:0007669"/>
    <property type="project" value="UniProtKB-KW"/>
</dbReference>
<dbReference type="GO" id="GO:0031640">
    <property type="term" value="P:killing of cells of another organism"/>
    <property type="evidence" value="ECO:0007669"/>
    <property type="project" value="UniProtKB-KW"/>
</dbReference>
<dbReference type="GO" id="GO:0016042">
    <property type="term" value="P:lipid catabolic process"/>
    <property type="evidence" value="ECO:0007669"/>
    <property type="project" value="UniProtKB-KW"/>
</dbReference>
<dbReference type="Gene3D" id="3.20.20.190">
    <property type="entry name" value="Phosphatidylinositol (PI) phosphodiesterase"/>
    <property type="match status" value="1"/>
</dbReference>
<dbReference type="InterPro" id="IPR017946">
    <property type="entry name" value="PLC-like_Pdiesterase_TIM-brl"/>
</dbReference>
<accession>Q7M485</accession>
<name>A1X1_LOXRE</name>
<feature type="chain" id="PRO_0000087677" description="Dermonecrotic toxin LrSicTox-alphaI-1">
    <location>
        <begin position="1"/>
        <end position="35" status="greater than"/>
    </location>
</feature>
<feature type="active site" evidence="5">
    <location>
        <position position="11"/>
    </location>
</feature>
<feature type="binding site" evidence="5">
    <location>
        <position position="33"/>
    </location>
    <ligand>
        <name>Mg(2+)</name>
        <dbReference type="ChEBI" id="CHEBI:18420"/>
    </ligand>
</feature>
<feature type="non-terminal residue">
    <location>
        <position position="35"/>
    </location>
</feature>
<keyword id="KW-0204">Cytolysis</keyword>
<keyword id="KW-1061">Dermonecrotic toxin</keyword>
<keyword id="KW-0903">Direct protein sequencing</keyword>
<keyword id="KW-1015">Disulfide bond</keyword>
<keyword id="KW-0354">Hemolysis</keyword>
<keyword id="KW-0442">Lipid degradation</keyword>
<keyword id="KW-0443">Lipid metabolism</keyword>
<keyword id="KW-0456">Lyase</keyword>
<keyword id="KW-0460">Magnesium</keyword>
<keyword id="KW-0479">Metal-binding</keyword>
<keyword id="KW-0964">Secreted</keyword>
<keyword id="KW-0800">Toxin</keyword>
<reference key="1">
    <citation type="journal article" date="1989" name="Toxicon">
        <title>Screening a brown recluse spider genomic library for the gene coding for the mammalian toxin using an oligonucleotide probe.</title>
        <authorList>
            <person name="Cisar C.R."/>
            <person name="Fox J.W."/>
            <person name="Geren C.R."/>
        </authorList>
    </citation>
    <scope>PROTEIN SEQUENCE</scope>
    <scope>SUBCELLULAR LOCATION</scope>
</reference>
<reference key="2">
    <citation type="journal article" date="2001" name="Toxicon">
        <title>Antigenic cross-reactivity of venoms from medically important north american Loxosceles spider species.</title>
        <authorList>
            <person name="Gomez H.F."/>
            <person name="Miller M.J."/>
            <person name="Waggener M.W."/>
            <person name="Lankford H.A."/>
            <person name="Warren J.S."/>
        </authorList>
    </citation>
    <scope>FUNCTION</scope>
</reference>
<proteinExistence type="evidence at protein level"/>
<comment type="function">
    <text evidence="1 3">Dermonecrotic toxins cleave the phosphodiester linkage between the phosphate and headgroup of certain phospholipids (sphingolipid and lysolipid substrates), forming an alcohol (often choline) and a cyclic phosphate (By similarity). This toxin acts on sphingomyelin (SM) (By similarity). It may also act on ceramide phosphoethanolamine (CPE), lysophosphatidylcholine (LPC) and lysophosphatidylethanolamine (LPE), but not on lysophosphatidylserine (LPS), and lysophosphatidylglycerol (LPG) (By similarity). It acts by transphosphatidylation, releasing exclusively cyclic phosphate products as second products (By similarity). Induces dermonecrosis, hemolysis, increased vascular permeability, edema, inflammatory response, and platelet aggregation (By similarity).</text>
</comment>
<comment type="catalytic activity">
    <reaction evidence="1">
        <text>an N-(acyl)-sphingosylphosphocholine = an N-(acyl)-sphingosyl-1,3-cyclic phosphate + choline</text>
        <dbReference type="Rhea" id="RHEA:60652"/>
        <dbReference type="ChEBI" id="CHEBI:15354"/>
        <dbReference type="ChEBI" id="CHEBI:64583"/>
        <dbReference type="ChEBI" id="CHEBI:143892"/>
    </reaction>
</comment>
<comment type="catalytic activity">
    <reaction evidence="1">
        <text>an N-(acyl)-sphingosylphosphoethanolamine = an N-(acyl)-sphingosyl-1,3-cyclic phosphate + ethanolamine</text>
        <dbReference type="Rhea" id="RHEA:60648"/>
        <dbReference type="ChEBI" id="CHEBI:57603"/>
        <dbReference type="ChEBI" id="CHEBI:143891"/>
        <dbReference type="ChEBI" id="CHEBI:143892"/>
    </reaction>
</comment>
<comment type="catalytic activity">
    <reaction evidence="1">
        <text>a 1-acyl-sn-glycero-3-phosphocholine = a 1-acyl-sn-glycero-2,3-cyclic phosphate + choline</text>
        <dbReference type="Rhea" id="RHEA:60700"/>
        <dbReference type="ChEBI" id="CHEBI:15354"/>
        <dbReference type="ChEBI" id="CHEBI:58168"/>
        <dbReference type="ChEBI" id="CHEBI:143947"/>
    </reaction>
</comment>
<comment type="catalytic activity">
    <reaction evidence="1">
        <text>a 1-acyl-sn-glycero-3-phosphoethanolamine = a 1-acyl-sn-glycero-2,3-cyclic phosphate + ethanolamine</text>
        <dbReference type="Rhea" id="RHEA:60704"/>
        <dbReference type="ChEBI" id="CHEBI:57603"/>
        <dbReference type="ChEBI" id="CHEBI:64381"/>
        <dbReference type="ChEBI" id="CHEBI:143947"/>
    </reaction>
</comment>
<comment type="cofactor">
    <cofactor evidence="5">
        <name>Mg(2+)</name>
        <dbReference type="ChEBI" id="CHEBI:18420"/>
    </cofactor>
    <text evidence="5">Binds 1 Mg(2+) ion per subunit.</text>
</comment>
<comment type="subcellular location">
    <subcellularLocation>
        <location evidence="6">Secreted</location>
    </subcellularLocation>
</comment>
<comment type="tissue specificity">
    <text evidence="8">Expressed by the venom gland.</text>
</comment>
<comment type="PTM">
    <text evidence="3">Contains 2 disulfide bonds.</text>
</comment>
<comment type="similarity">
    <text evidence="7">Belongs to the arthropod phospholipase D family. Class II subfamily.</text>
</comment>
<comment type="caution">
    <text evidence="1 2 4">The most common activity assay for dermonecrotic toxins detects enzymatic activity by monitoring choline release from substrate. Liberation of choline from sphingomyelin (SM) or lysophosphatidylcholine (LPC) is commonly assumed to result from substrate hydrolysis, giving either ceramide-1-phosphate (C1P) or lysophosphatidic acid (LPA), respectively, as a second product. However, two studies from Lajoie and colleagues (2013 and 2015) report the observation of exclusive formation of cyclic phosphate products as second products, resulting from intramolecular transphosphatidylation. Cyclic phosphates have vastly different biological properties from their monoester counterparts, and they may be relevant to the pathology of brown spider envenomation.</text>
</comment>
<organism>
    <name type="scientific">Loxosceles reclusa</name>
    <name type="common">Brown recluse spider</name>
    <dbReference type="NCBI Taxonomy" id="6921"/>
    <lineage>
        <taxon>Eukaryota</taxon>
        <taxon>Metazoa</taxon>
        <taxon>Ecdysozoa</taxon>
        <taxon>Arthropoda</taxon>
        <taxon>Chelicerata</taxon>
        <taxon>Arachnida</taxon>
        <taxon>Araneae</taxon>
        <taxon>Araneomorphae</taxon>
        <taxon>Haplogynae</taxon>
        <taxon>Scytodoidea</taxon>
        <taxon>Sicariidae</taxon>
        <taxon>Loxosceles</taxon>
    </lineage>
</organism>
<evidence type="ECO:0000250" key="1">
    <source>
        <dbReference type="UniProtKB" id="A0A0D4WTV1"/>
    </source>
</evidence>
<evidence type="ECO:0000250" key="2">
    <source>
        <dbReference type="UniProtKB" id="A0A0D4WV12"/>
    </source>
</evidence>
<evidence type="ECO:0000250" key="3">
    <source>
        <dbReference type="UniProtKB" id="P0CE80"/>
    </source>
</evidence>
<evidence type="ECO:0000250" key="4">
    <source>
        <dbReference type="UniProtKB" id="Q4ZFU2"/>
    </source>
</evidence>
<evidence type="ECO:0000250" key="5">
    <source>
        <dbReference type="UniProtKB" id="Q8I914"/>
    </source>
</evidence>
<evidence type="ECO:0000269" key="6">
    <source ref="1"/>
</evidence>
<evidence type="ECO:0000305" key="7"/>
<evidence type="ECO:0000305" key="8">
    <source ref="1"/>
</evidence>
<protein>
    <recommendedName>
        <fullName>Dermonecrotic toxin LrSicTox-alphaI-1</fullName>
        <ecNumber evidence="4">4.6.1.-</ecNumber>
    </recommendedName>
    <alternativeName>
        <fullName>Mammalian toxin</fullName>
    </alternativeName>
    <alternativeName>
        <fullName>Phospholipase D</fullName>
        <shortName>PLD</shortName>
    </alternativeName>
    <alternativeName>
        <fullName>Sphingomyelin phosphodiesterase D</fullName>
        <shortName>SMD</shortName>
        <shortName>SMase D</shortName>
        <shortName>Sphingomyelinase D</shortName>
    </alternativeName>
</protein>
<sequence length="35" mass="3905">ANKRPVWIMGHMVNAVYQIDEFVNLGANSIDTDVS</sequence>